<protein>
    <recommendedName>
        <fullName evidence="1">3D-(3,5/4)-trihydroxycyclohexane-1,2-dione hydrolase</fullName>
        <shortName evidence="1">THcHDO hydrolase</shortName>
        <ecNumber evidence="1">3.7.1.22</ecNumber>
    </recommendedName>
</protein>
<organism>
    <name type="scientific">Bacillus anthracis</name>
    <dbReference type="NCBI Taxonomy" id="1392"/>
    <lineage>
        <taxon>Bacteria</taxon>
        <taxon>Bacillati</taxon>
        <taxon>Bacillota</taxon>
        <taxon>Bacilli</taxon>
        <taxon>Bacillales</taxon>
        <taxon>Bacillaceae</taxon>
        <taxon>Bacillus</taxon>
        <taxon>Bacillus cereus group</taxon>
    </lineage>
</organism>
<name>IOLD_BACAN</name>
<sequence>MQTVRMTTAQALVKFLNQQYVEFDGKQQKFVKGIFTIFGHGNVVGLGQALEEDAGELEVYQGRNEQGMANAAMAFAKQKHRKQIMACTSSVGPGSANMITSAATASANNIPVLLLPGDVFATRQPDPVLQQIEQTHDLSISTNDAFRAVSKYWDRINRPEQLMTAMIQAMRVLTNPADTGAVTICLPQDVQGEAWDFPSYFFQKRVHRIERRLPTKASLADAVEMIKRKKKPVMICGGGVRYAEAAEELKQFAETFHIPFGETQAGKSAIESSHPYNLGGIGVTGNVAANTIAKEADLVIGIGTRFTDFTTASKQLFQNEEVEFLNINISEFHANKLDALKVIADAKEALLALIDELQEIDYQSSYTVEIADAKDAWETELSRLHNIRFTCQDFTPEVEGHFNENLNEYVDALGTQLTQTAVIGQINTLLDKDAIIVGAAGSLPGDLQRMWASRKPNTYHMEYGYSCMGYEVAGALGAKLAEPSKEVYAMVGDGSYQMLHSELVTSLQENKKINVLLFDNSGFGCINNLQMGNGMGSFGTEFRYRNQETRKLDGAIMKIDFAASAAGYGVKTYHVTSLEQLQEALIDAKKQTVSTLIDIKVLPKTMTNGYESWWHVGVAEVSKNQSVQAAYESKVSNLQQARSY</sequence>
<comment type="function">
    <text evidence="1">Involved in the cleavage of the C1-C2 bond of 3D-(3,5/4)-trihydroxycyclohexane-1,2-dione (THcHDO) to yield 5-deoxy-glucuronate (5DG).</text>
</comment>
<comment type="catalytic activity">
    <reaction evidence="1">
        <text>3D-3,5/4-trihydroxycyclohexane-1,2-dione + H2O = 5-deoxy-D-glucuronate + H(+)</text>
        <dbReference type="Rhea" id="RHEA:25836"/>
        <dbReference type="ChEBI" id="CHEBI:15377"/>
        <dbReference type="ChEBI" id="CHEBI:15378"/>
        <dbReference type="ChEBI" id="CHEBI:28446"/>
        <dbReference type="ChEBI" id="CHEBI:58852"/>
        <dbReference type="EC" id="3.7.1.22"/>
    </reaction>
</comment>
<comment type="cofactor">
    <cofactor evidence="1">
        <name>Mg(2+)</name>
        <dbReference type="ChEBI" id="CHEBI:18420"/>
    </cofactor>
    <text evidence="1">Binds 1 Mg(2+) ion per subunit.</text>
</comment>
<comment type="cofactor">
    <cofactor evidence="1">
        <name>thiamine diphosphate</name>
        <dbReference type="ChEBI" id="CHEBI:58937"/>
    </cofactor>
    <text evidence="1">Binds 1 thiamine pyrophosphate per subunit.</text>
</comment>
<comment type="pathway">
    <text evidence="1">Polyol metabolism; myo-inositol degradation into acetyl-CoA; acetyl-CoA from myo-inositol: step 3/7.</text>
</comment>
<comment type="similarity">
    <text evidence="1">Belongs to the TPP enzyme family.</text>
</comment>
<dbReference type="EC" id="3.7.1.22" evidence="1"/>
<dbReference type="EMBL" id="AE016879">
    <property type="protein sequence ID" value="AAP26372.1"/>
    <property type="molecule type" value="Genomic_DNA"/>
</dbReference>
<dbReference type="EMBL" id="AE017334">
    <property type="protein sequence ID" value="AAT31625.1"/>
    <property type="molecule type" value="Genomic_DNA"/>
</dbReference>
<dbReference type="EMBL" id="AE017225">
    <property type="protein sequence ID" value="AAT54647.1"/>
    <property type="molecule type" value="Genomic_DNA"/>
</dbReference>
<dbReference type="RefSeq" id="NP_844886.1">
    <property type="nucleotide sequence ID" value="NC_003997.3"/>
</dbReference>
<dbReference type="RefSeq" id="WP_001195355.1">
    <property type="nucleotide sequence ID" value="NZ_WXXJ01000008.1"/>
</dbReference>
<dbReference type="RefSeq" id="YP_028596.1">
    <property type="nucleotide sequence ID" value="NC_005945.1"/>
</dbReference>
<dbReference type="SMR" id="Q81QB5"/>
<dbReference type="IntAct" id="Q81QB5">
    <property type="interactions" value="1"/>
</dbReference>
<dbReference type="STRING" id="261594.GBAA_2514"/>
<dbReference type="DNASU" id="1085050"/>
<dbReference type="GeneID" id="45022377"/>
<dbReference type="KEGG" id="ban:BA_2514"/>
<dbReference type="KEGG" id="banh:HYU01_12480"/>
<dbReference type="KEGG" id="bar:GBAA_2514"/>
<dbReference type="KEGG" id="bat:BAS2335"/>
<dbReference type="PATRIC" id="fig|198094.11.peg.2487"/>
<dbReference type="eggNOG" id="COG3962">
    <property type="taxonomic scope" value="Bacteria"/>
</dbReference>
<dbReference type="HOGENOM" id="CLU_013748_6_0_9"/>
<dbReference type="OMA" id="PNTYHLE"/>
<dbReference type="OrthoDB" id="4494979at2"/>
<dbReference type="UniPathway" id="UPA00076">
    <property type="reaction ID" value="UER00145"/>
</dbReference>
<dbReference type="Proteomes" id="UP000000427">
    <property type="component" value="Chromosome"/>
</dbReference>
<dbReference type="Proteomes" id="UP000000594">
    <property type="component" value="Chromosome"/>
</dbReference>
<dbReference type="GO" id="GO:0005948">
    <property type="term" value="C:acetolactate synthase complex"/>
    <property type="evidence" value="ECO:0007669"/>
    <property type="project" value="TreeGrafter"/>
</dbReference>
<dbReference type="GO" id="GO:0102481">
    <property type="term" value="F:3D-(3,5/4)-trihydroxycyclohexane-1,2-dione hydrolase activity"/>
    <property type="evidence" value="ECO:0007669"/>
    <property type="project" value="UniProtKB-EC"/>
</dbReference>
<dbReference type="GO" id="GO:0003984">
    <property type="term" value="F:acetolactate synthase activity"/>
    <property type="evidence" value="ECO:0007669"/>
    <property type="project" value="TreeGrafter"/>
</dbReference>
<dbReference type="GO" id="GO:0050660">
    <property type="term" value="F:flavin adenine dinucleotide binding"/>
    <property type="evidence" value="ECO:0007669"/>
    <property type="project" value="TreeGrafter"/>
</dbReference>
<dbReference type="GO" id="GO:0000287">
    <property type="term" value="F:magnesium ion binding"/>
    <property type="evidence" value="ECO:0007669"/>
    <property type="project" value="UniProtKB-UniRule"/>
</dbReference>
<dbReference type="GO" id="GO:0030976">
    <property type="term" value="F:thiamine pyrophosphate binding"/>
    <property type="evidence" value="ECO:0007669"/>
    <property type="project" value="UniProtKB-UniRule"/>
</dbReference>
<dbReference type="GO" id="GO:0019310">
    <property type="term" value="P:inositol catabolic process"/>
    <property type="evidence" value="ECO:0007669"/>
    <property type="project" value="UniProtKB-UniRule"/>
</dbReference>
<dbReference type="GO" id="GO:0009097">
    <property type="term" value="P:isoleucine biosynthetic process"/>
    <property type="evidence" value="ECO:0007669"/>
    <property type="project" value="TreeGrafter"/>
</dbReference>
<dbReference type="GO" id="GO:0009099">
    <property type="term" value="P:L-valine biosynthetic process"/>
    <property type="evidence" value="ECO:0007669"/>
    <property type="project" value="TreeGrafter"/>
</dbReference>
<dbReference type="CDD" id="cd02003">
    <property type="entry name" value="TPP_IolD"/>
    <property type="match status" value="1"/>
</dbReference>
<dbReference type="CDD" id="cd07035">
    <property type="entry name" value="TPP_PYR_POX_like"/>
    <property type="match status" value="1"/>
</dbReference>
<dbReference type="FunFam" id="3.40.50.1220:FF:000040">
    <property type="entry name" value="3D-(3,5/4)-trihydroxycyclohexane-1,2-dione hydrolase"/>
    <property type="match status" value="1"/>
</dbReference>
<dbReference type="FunFam" id="3.40.50.970:FF:000056">
    <property type="entry name" value="3D-(3,5/4)-trihydroxycyclohexane-1,2-dione hydrolase"/>
    <property type="match status" value="1"/>
</dbReference>
<dbReference type="FunFam" id="3.40.50.970:FF:000072">
    <property type="entry name" value="3D-(3,5/4)-trihydroxycyclohexane-1,2-dione hydrolase"/>
    <property type="match status" value="1"/>
</dbReference>
<dbReference type="Gene3D" id="3.40.50.970">
    <property type="match status" value="2"/>
</dbReference>
<dbReference type="Gene3D" id="3.40.50.1220">
    <property type="entry name" value="TPP-binding domain"/>
    <property type="match status" value="1"/>
</dbReference>
<dbReference type="HAMAP" id="MF_01669">
    <property type="entry name" value="IolD"/>
    <property type="match status" value="1"/>
</dbReference>
<dbReference type="InterPro" id="IPR029035">
    <property type="entry name" value="DHS-like_NAD/FAD-binding_dom"/>
</dbReference>
<dbReference type="InterPro" id="IPR030817">
    <property type="entry name" value="Myo_inos_IolD"/>
</dbReference>
<dbReference type="InterPro" id="IPR023757">
    <property type="entry name" value="THcHDO_hydrolase_firmi"/>
</dbReference>
<dbReference type="InterPro" id="IPR029061">
    <property type="entry name" value="THDP-binding"/>
</dbReference>
<dbReference type="InterPro" id="IPR012000">
    <property type="entry name" value="Thiamin_PyroP_enz_cen_dom"/>
</dbReference>
<dbReference type="InterPro" id="IPR012001">
    <property type="entry name" value="Thiamin_PyroP_enz_TPP-bd_dom"/>
</dbReference>
<dbReference type="InterPro" id="IPR000399">
    <property type="entry name" value="TPP-bd_CS"/>
</dbReference>
<dbReference type="InterPro" id="IPR045229">
    <property type="entry name" value="TPP_enz"/>
</dbReference>
<dbReference type="InterPro" id="IPR011766">
    <property type="entry name" value="TPP_enzyme_TPP-bd"/>
</dbReference>
<dbReference type="NCBIfam" id="TIGR04377">
    <property type="entry name" value="myo_inos_iolD"/>
    <property type="match status" value="1"/>
</dbReference>
<dbReference type="PANTHER" id="PTHR18968:SF9">
    <property type="entry name" value="3D-(3,5_4)-TRIHYDROXYCYCLOHEXANE-1,2-DIONE HYDROLASE"/>
    <property type="match status" value="1"/>
</dbReference>
<dbReference type="PANTHER" id="PTHR18968">
    <property type="entry name" value="THIAMINE PYROPHOSPHATE ENZYMES"/>
    <property type="match status" value="1"/>
</dbReference>
<dbReference type="Pfam" id="PF02775">
    <property type="entry name" value="TPP_enzyme_C"/>
    <property type="match status" value="1"/>
</dbReference>
<dbReference type="Pfam" id="PF00205">
    <property type="entry name" value="TPP_enzyme_M"/>
    <property type="match status" value="1"/>
</dbReference>
<dbReference type="Pfam" id="PF02776">
    <property type="entry name" value="TPP_enzyme_N"/>
    <property type="match status" value="1"/>
</dbReference>
<dbReference type="SUPFAM" id="SSF52467">
    <property type="entry name" value="DHS-like NAD/FAD-binding domain"/>
    <property type="match status" value="1"/>
</dbReference>
<dbReference type="SUPFAM" id="SSF52518">
    <property type="entry name" value="Thiamin diphosphate-binding fold (THDP-binding)"/>
    <property type="match status" value="2"/>
</dbReference>
<dbReference type="PROSITE" id="PS00187">
    <property type="entry name" value="TPP_ENZYMES"/>
    <property type="match status" value="1"/>
</dbReference>
<proteinExistence type="inferred from homology"/>
<accession>Q81QB5</accession>
<accession>Q6HYJ2</accession>
<accession>Q6KSJ3</accession>
<reference key="1">
    <citation type="journal article" date="2003" name="Nature">
        <title>The genome sequence of Bacillus anthracis Ames and comparison to closely related bacteria.</title>
        <authorList>
            <person name="Read T.D."/>
            <person name="Peterson S.N."/>
            <person name="Tourasse N.J."/>
            <person name="Baillie L.W."/>
            <person name="Paulsen I.T."/>
            <person name="Nelson K.E."/>
            <person name="Tettelin H."/>
            <person name="Fouts D.E."/>
            <person name="Eisen J.A."/>
            <person name="Gill S.R."/>
            <person name="Holtzapple E.K."/>
            <person name="Okstad O.A."/>
            <person name="Helgason E."/>
            <person name="Rilstone J."/>
            <person name="Wu M."/>
            <person name="Kolonay J.F."/>
            <person name="Beanan M.J."/>
            <person name="Dodson R.J."/>
            <person name="Brinkac L.M."/>
            <person name="Gwinn M.L."/>
            <person name="DeBoy R.T."/>
            <person name="Madpu R."/>
            <person name="Daugherty S.C."/>
            <person name="Durkin A.S."/>
            <person name="Haft D.H."/>
            <person name="Nelson W.C."/>
            <person name="Peterson J.D."/>
            <person name="Pop M."/>
            <person name="Khouri H.M."/>
            <person name="Radune D."/>
            <person name="Benton J.L."/>
            <person name="Mahamoud Y."/>
            <person name="Jiang L."/>
            <person name="Hance I.R."/>
            <person name="Weidman J.F."/>
            <person name="Berry K.J."/>
            <person name="Plaut R.D."/>
            <person name="Wolf A.M."/>
            <person name="Watkins K.L."/>
            <person name="Nierman W.C."/>
            <person name="Hazen A."/>
            <person name="Cline R.T."/>
            <person name="Redmond C."/>
            <person name="Thwaite J.E."/>
            <person name="White O."/>
            <person name="Salzberg S.L."/>
            <person name="Thomason B."/>
            <person name="Friedlander A.M."/>
            <person name="Koehler T.M."/>
            <person name="Hanna P.C."/>
            <person name="Kolstoe A.-B."/>
            <person name="Fraser C.M."/>
        </authorList>
    </citation>
    <scope>NUCLEOTIDE SEQUENCE [LARGE SCALE GENOMIC DNA]</scope>
    <source>
        <strain>Ames / isolate Porton</strain>
    </source>
</reference>
<reference key="2">
    <citation type="submission" date="2004-01" db="EMBL/GenBank/DDBJ databases">
        <title>Complete genome sequence of Bacillus anthracis Sterne.</title>
        <authorList>
            <person name="Brettin T.S."/>
            <person name="Bruce D."/>
            <person name="Challacombe J.F."/>
            <person name="Gilna P."/>
            <person name="Han C."/>
            <person name="Hill K."/>
            <person name="Hitchcock P."/>
            <person name="Jackson P."/>
            <person name="Keim P."/>
            <person name="Longmire J."/>
            <person name="Lucas S."/>
            <person name="Okinaka R."/>
            <person name="Richardson P."/>
            <person name="Rubin E."/>
            <person name="Tice H."/>
        </authorList>
    </citation>
    <scope>NUCLEOTIDE SEQUENCE [LARGE SCALE GENOMIC DNA]</scope>
    <source>
        <strain>Sterne</strain>
    </source>
</reference>
<reference key="3">
    <citation type="journal article" date="2009" name="J. Bacteriol.">
        <title>The complete genome sequence of Bacillus anthracis Ames 'Ancestor'.</title>
        <authorList>
            <person name="Ravel J."/>
            <person name="Jiang L."/>
            <person name="Stanley S.T."/>
            <person name="Wilson M.R."/>
            <person name="Decker R.S."/>
            <person name="Read T.D."/>
            <person name="Worsham P."/>
            <person name="Keim P.S."/>
            <person name="Salzberg S.L."/>
            <person name="Fraser-Liggett C.M."/>
            <person name="Rasko D.A."/>
        </authorList>
    </citation>
    <scope>NUCLEOTIDE SEQUENCE [LARGE SCALE GENOMIC DNA]</scope>
    <source>
        <strain>Ames ancestor</strain>
    </source>
</reference>
<gene>
    <name evidence="1" type="primary">iolD</name>
    <name type="ordered locus">BA_2514</name>
    <name type="ordered locus">GBAA_2514</name>
    <name type="ordered locus">BAS2335</name>
</gene>
<keyword id="KW-0378">Hydrolase</keyword>
<keyword id="KW-0460">Magnesium</keyword>
<keyword id="KW-0479">Metal-binding</keyword>
<keyword id="KW-0520">NAD</keyword>
<keyword id="KW-1185">Reference proteome</keyword>
<keyword id="KW-0786">Thiamine pyrophosphate</keyword>
<evidence type="ECO:0000255" key="1">
    <source>
        <dbReference type="HAMAP-Rule" id="MF_01669"/>
    </source>
</evidence>
<feature type="chain" id="PRO_0000352529" description="3D-(3,5/4)-trihydroxycyclohexane-1,2-dione hydrolase">
    <location>
        <begin position="1"/>
        <end position="644"/>
    </location>
</feature>
<feature type="region of interest" description="Thiamine pyrophosphate binding" evidence="1">
    <location>
        <begin position="442"/>
        <end position="522"/>
    </location>
</feature>
<feature type="binding site" evidence="1">
    <location>
        <position position="65"/>
    </location>
    <ligand>
        <name>thiamine diphosphate</name>
        <dbReference type="ChEBI" id="CHEBI:58937"/>
    </ligand>
</feature>
<feature type="binding site" evidence="1">
    <location>
        <position position="493"/>
    </location>
    <ligand>
        <name>Mg(2+)</name>
        <dbReference type="ChEBI" id="CHEBI:18420"/>
    </ligand>
</feature>
<feature type="binding site" evidence="1">
    <location>
        <position position="520"/>
    </location>
    <ligand>
        <name>Mg(2+)</name>
        <dbReference type="ChEBI" id="CHEBI:18420"/>
    </ligand>
</feature>